<evidence type="ECO:0000255" key="1">
    <source>
        <dbReference type="HAMAP-Rule" id="MF_00664"/>
    </source>
</evidence>
<sequence>MRQYNDLFKIIHREGYIFIASFALVSFLLASFNEKLGCIGFIATAWCIYFFRNPDRFVPISDDLVISPADGIIQEIKEALPPQELGLGDVEMIRVSIFLNIFNVHVNRIPANGKILALHYNPGKFFNASLDKASIYNERQSVLMETDKGQKIVFVQIAGLIARRIVCDLEEGNEVKTGERYGIIRFGSRVDVYLPLKTALLVSKGQTAIGGETIIADFGRKKIAEFKFERR</sequence>
<feature type="chain" id="PRO_1000026684" description="Phosphatidylserine decarboxylase beta chain" evidence="1">
    <location>
        <begin position="1"/>
        <end position="187"/>
    </location>
</feature>
<feature type="chain" id="PRO_1000026685" description="Phosphatidylserine decarboxylase alpha chain" evidence="1">
    <location>
        <begin position="188"/>
        <end position="231"/>
    </location>
</feature>
<feature type="active site" description="Schiff-base intermediate with substrate; via pyruvic acid" evidence="1">
    <location>
        <position position="188"/>
    </location>
</feature>
<feature type="site" description="Cleavage (non-hydrolytic); by autocatalysis" evidence="1">
    <location>
        <begin position="187"/>
        <end position="188"/>
    </location>
</feature>
<feature type="modified residue" description="Pyruvic acid (Ser); by autocatalysis" evidence="1">
    <location>
        <position position="188"/>
    </location>
</feature>
<comment type="function">
    <text evidence="1">Catalyzes the formation of phosphatidylethanolamine (PtdEtn) from phosphatidylserine (PtdSer).</text>
</comment>
<comment type="catalytic activity">
    <reaction evidence="1">
        <text>a 1,2-diacyl-sn-glycero-3-phospho-L-serine + H(+) = a 1,2-diacyl-sn-glycero-3-phosphoethanolamine + CO2</text>
        <dbReference type="Rhea" id="RHEA:20828"/>
        <dbReference type="ChEBI" id="CHEBI:15378"/>
        <dbReference type="ChEBI" id="CHEBI:16526"/>
        <dbReference type="ChEBI" id="CHEBI:57262"/>
        <dbReference type="ChEBI" id="CHEBI:64612"/>
        <dbReference type="EC" id="4.1.1.65"/>
    </reaction>
</comment>
<comment type="cofactor">
    <cofactor evidence="1">
        <name>pyruvate</name>
        <dbReference type="ChEBI" id="CHEBI:15361"/>
    </cofactor>
    <text evidence="1">Binds 1 pyruvoyl group covalently per subunit.</text>
</comment>
<comment type="pathway">
    <text evidence="1">Phospholipid metabolism; phosphatidylethanolamine biosynthesis; phosphatidylethanolamine from CDP-diacylglycerol: step 2/2.</text>
</comment>
<comment type="subunit">
    <text evidence="1">Heterodimer of a large membrane-associated beta subunit and a small pyruvoyl-containing alpha subunit.</text>
</comment>
<comment type="subcellular location">
    <subcellularLocation>
        <location evidence="1">Cell membrane</location>
        <topology evidence="1">Peripheral membrane protein</topology>
    </subcellularLocation>
</comment>
<comment type="PTM">
    <text evidence="1">Is synthesized initially as an inactive proenzyme. Formation of the active enzyme involves a self-maturation process in which the active site pyruvoyl group is generated from an internal serine residue via an autocatalytic post-translational modification. Two non-identical subunits are generated from the proenzyme in this reaction, and the pyruvate is formed at the N-terminus of the alpha chain, which is derived from the carboxyl end of the proenzyme. The post-translation cleavage follows an unusual pathway, termed non-hydrolytic serinolysis, in which the side chain hydroxyl group of the serine supplies its oxygen atom to form the C-terminus of the beta chain, while the remainder of the serine residue undergoes an oxidative deamination to produce ammonia and the pyruvoyl prosthetic group on the alpha chain.</text>
</comment>
<comment type="similarity">
    <text evidence="1">Belongs to the phosphatidylserine decarboxylase family. PSD-A subfamily.</text>
</comment>
<dbReference type="EC" id="4.1.1.65" evidence="1"/>
<dbReference type="EMBL" id="CP000847">
    <property type="protein sequence ID" value="ABV74664.1"/>
    <property type="molecule type" value="Genomic_DNA"/>
</dbReference>
<dbReference type="RefSeq" id="WP_012149298.1">
    <property type="nucleotide sequence ID" value="NC_009881.1"/>
</dbReference>
<dbReference type="SMR" id="A8GMN9"/>
<dbReference type="STRING" id="293614.A1C_01765"/>
<dbReference type="KEGG" id="rak:A1C_01765"/>
<dbReference type="eggNOG" id="COG0688">
    <property type="taxonomic scope" value="Bacteria"/>
</dbReference>
<dbReference type="HOGENOM" id="CLU_072492_0_0_5"/>
<dbReference type="UniPathway" id="UPA00558">
    <property type="reaction ID" value="UER00616"/>
</dbReference>
<dbReference type="Proteomes" id="UP000006830">
    <property type="component" value="Chromosome"/>
</dbReference>
<dbReference type="GO" id="GO:0005886">
    <property type="term" value="C:plasma membrane"/>
    <property type="evidence" value="ECO:0007669"/>
    <property type="project" value="UniProtKB-SubCell"/>
</dbReference>
<dbReference type="GO" id="GO:0004609">
    <property type="term" value="F:phosphatidylserine decarboxylase activity"/>
    <property type="evidence" value="ECO:0007669"/>
    <property type="project" value="UniProtKB-UniRule"/>
</dbReference>
<dbReference type="GO" id="GO:0006646">
    <property type="term" value="P:phosphatidylethanolamine biosynthetic process"/>
    <property type="evidence" value="ECO:0007669"/>
    <property type="project" value="UniProtKB-UniRule"/>
</dbReference>
<dbReference type="HAMAP" id="MF_00664">
    <property type="entry name" value="PS_decarb_PSD_A"/>
    <property type="match status" value="1"/>
</dbReference>
<dbReference type="InterPro" id="IPR003817">
    <property type="entry name" value="PS_Dcarbxylase"/>
</dbReference>
<dbReference type="InterPro" id="IPR033175">
    <property type="entry name" value="PSD-A"/>
</dbReference>
<dbReference type="NCBIfam" id="NF003677">
    <property type="entry name" value="PRK05305.1-1"/>
    <property type="match status" value="1"/>
</dbReference>
<dbReference type="NCBIfam" id="NF003678">
    <property type="entry name" value="PRK05305.1-2"/>
    <property type="match status" value="1"/>
</dbReference>
<dbReference type="NCBIfam" id="NF003679">
    <property type="entry name" value="PRK05305.1-3"/>
    <property type="match status" value="1"/>
</dbReference>
<dbReference type="NCBIfam" id="NF003681">
    <property type="entry name" value="PRK05305.2-1"/>
    <property type="match status" value="1"/>
</dbReference>
<dbReference type="NCBIfam" id="NF003685">
    <property type="entry name" value="PRK05305.2-5"/>
    <property type="match status" value="1"/>
</dbReference>
<dbReference type="PANTHER" id="PTHR35809">
    <property type="entry name" value="ARCHAETIDYLSERINE DECARBOXYLASE PROENZYME-RELATED"/>
    <property type="match status" value="1"/>
</dbReference>
<dbReference type="PANTHER" id="PTHR35809:SF1">
    <property type="entry name" value="ARCHAETIDYLSERINE DECARBOXYLASE PROENZYME-RELATED"/>
    <property type="match status" value="1"/>
</dbReference>
<dbReference type="Pfam" id="PF02666">
    <property type="entry name" value="PS_Dcarbxylase"/>
    <property type="match status" value="1"/>
</dbReference>
<gene>
    <name evidence="1" type="primary">psd</name>
    <name type="ordered locus">A1C_01765</name>
</gene>
<protein>
    <recommendedName>
        <fullName evidence="1">Phosphatidylserine decarboxylase proenzyme</fullName>
        <ecNumber evidence="1">4.1.1.65</ecNumber>
    </recommendedName>
    <component>
        <recommendedName>
            <fullName evidence="1">Phosphatidylserine decarboxylase alpha chain</fullName>
        </recommendedName>
    </component>
    <component>
        <recommendedName>
            <fullName evidence="1">Phosphatidylserine decarboxylase beta chain</fullName>
        </recommendedName>
    </component>
</protein>
<keyword id="KW-1003">Cell membrane</keyword>
<keyword id="KW-0210">Decarboxylase</keyword>
<keyword id="KW-0444">Lipid biosynthesis</keyword>
<keyword id="KW-0443">Lipid metabolism</keyword>
<keyword id="KW-0456">Lyase</keyword>
<keyword id="KW-0472">Membrane</keyword>
<keyword id="KW-0594">Phospholipid biosynthesis</keyword>
<keyword id="KW-1208">Phospholipid metabolism</keyword>
<keyword id="KW-0670">Pyruvate</keyword>
<keyword id="KW-0865">Zymogen</keyword>
<organism>
    <name type="scientific">Rickettsia akari (strain Hartford)</name>
    <dbReference type="NCBI Taxonomy" id="293614"/>
    <lineage>
        <taxon>Bacteria</taxon>
        <taxon>Pseudomonadati</taxon>
        <taxon>Pseudomonadota</taxon>
        <taxon>Alphaproteobacteria</taxon>
        <taxon>Rickettsiales</taxon>
        <taxon>Rickettsiaceae</taxon>
        <taxon>Rickettsieae</taxon>
        <taxon>Rickettsia</taxon>
        <taxon>spotted fever group</taxon>
    </lineage>
</organism>
<proteinExistence type="inferred from homology"/>
<reference key="1">
    <citation type="submission" date="2007-09" db="EMBL/GenBank/DDBJ databases">
        <title>Complete genome sequence of Rickettsia akari.</title>
        <authorList>
            <person name="Madan A."/>
            <person name="Fahey J."/>
            <person name="Helton E."/>
            <person name="Ketteman M."/>
            <person name="Madan A."/>
            <person name="Rodrigues S."/>
            <person name="Sanchez A."/>
            <person name="Whiting M."/>
            <person name="Dasch G."/>
            <person name="Eremeeva M."/>
        </authorList>
    </citation>
    <scope>NUCLEOTIDE SEQUENCE [LARGE SCALE GENOMIC DNA]</scope>
    <source>
        <strain>Hartford</strain>
    </source>
</reference>
<accession>A8GMN9</accession>
<name>PSD_RICAH</name>